<comment type="catalytic activity">
    <reaction evidence="1">
        <text>D-arabinose 5-phosphate + phosphoenolpyruvate + H2O = 3-deoxy-alpha-D-manno-2-octulosonate-8-phosphate + phosphate</text>
        <dbReference type="Rhea" id="RHEA:14053"/>
        <dbReference type="ChEBI" id="CHEBI:15377"/>
        <dbReference type="ChEBI" id="CHEBI:43474"/>
        <dbReference type="ChEBI" id="CHEBI:57693"/>
        <dbReference type="ChEBI" id="CHEBI:58702"/>
        <dbReference type="ChEBI" id="CHEBI:85985"/>
        <dbReference type="EC" id="2.5.1.55"/>
    </reaction>
</comment>
<comment type="pathway">
    <text evidence="1">Carbohydrate biosynthesis; 3-deoxy-D-manno-octulosonate biosynthesis; 3-deoxy-D-manno-octulosonate from D-ribulose 5-phosphate: step 2/3.</text>
</comment>
<comment type="pathway">
    <text evidence="1">Bacterial outer membrane biogenesis; lipopolysaccharide biosynthesis.</text>
</comment>
<comment type="subcellular location">
    <subcellularLocation>
        <location evidence="1">Cytoplasm</location>
    </subcellularLocation>
</comment>
<comment type="similarity">
    <text evidence="1">Belongs to the KdsA family.</text>
</comment>
<organism>
    <name type="scientific">Xanthomonas oryzae pv. oryzae (strain PXO99A)</name>
    <dbReference type="NCBI Taxonomy" id="360094"/>
    <lineage>
        <taxon>Bacteria</taxon>
        <taxon>Pseudomonadati</taxon>
        <taxon>Pseudomonadota</taxon>
        <taxon>Gammaproteobacteria</taxon>
        <taxon>Lysobacterales</taxon>
        <taxon>Lysobacteraceae</taxon>
        <taxon>Xanthomonas</taxon>
    </lineage>
</organism>
<keyword id="KW-0963">Cytoplasm</keyword>
<keyword id="KW-0448">Lipopolysaccharide biosynthesis</keyword>
<keyword id="KW-0808">Transferase</keyword>
<gene>
    <name evidence="1" type="primary">kdsA</name>
    <name type="ordered locus">PXO_00173</name>
</gene>
<evidence type="ECO:0000255" key="1">
    <source>
        <dbReference type="HAMAP-Rule" id="MF_00056"/>
    </source>
</evidence>
<protein>
    <recommendedName>
        <fullName evidence="1">2-dehydro-3-deoxyphosphooctonate aldolase</fullName>
        <ecNumber evidence="1">2.5.1.55</ecNumber>
    </recommendedName>
    <alternativeName>
        <fullName evidence="1">3-deoxy-D-manno-octulosonic acid 8-phosphate synthase</fullName>
    </alternativeName>
    <alternativeName>
        <fullName evidence="1">KDO-8-phosphate synthase</fullName>
        <shortName evidence="1">KDO 8-P synthase</shortName>
        <shortName evidence="1">KDOPS</shortName>
    </alternativeName>
    <alternativeName>
        <fullName evidence="1">Phospho-2-dehydro-3-deoxyoctonate aldolase</fullName>
    </alternativeName>
</protein>
<proteinExistence type="inferred from homology"/>
<sequence length="276" mass="29653">MKLCGFEVGLDQPLFLIAGPCVIESMQLQLDVAGKLKEITGKLGVNFIFKSSFDKANRTSGTSFRGPGLEEGLKVLDAVKRQIGVPVLTDVHEYTPMNEVAAVVDVLQTPAFLVRQTDFIKNVCAAGKPVNIKKGQFLAPWDMKPVVDKAKSTGNAQIMVCERGASFGYNNLVSDMRSLSVMRDTGCPVVFDATHSVQLPGGQGSSSGGQREFVPVLARAAVAVGISGLFAETHPDPSKALSDGPNAWPLDRMEELLETLMELDAVTKKHGFARFA</sequence>
<name>KDSA_XANOP</name>
<feature type="chain" id="PRO_1000091843" description="2-dehydro-3-deoxyphosphooctonate aldolase">
    <location>
        <begin position="1"/>
        <end position="276"/>
    </location>
</feature>
<reference key="1">
    <citation type="journal article" date="2008" name="BMC Genomics">
        <title>Genome sequence and rapid evolution of the rice pathogen Xanthomonas oryzae pv. oryzae PXO99A.</title>
        <authorList>
            <person name="Salzberg S.L."/>
            <person name="Sommer D.D."/>
            <person name="Schatz M.C."/>
            <person name="Phillippy A.M."/>
            <person name="Rabinowicz P.D."/>
            <person name="Tsuge S."/>
            <person name="Furutani A."/>
            <person name="Ochiai H."/>
            <person name="Delcher A.L."/>
            <person name="Kelley D."/>
            <person name="Madupu R."/>
            <person name="Puiu D."/>
            <person name="Radune D."/>
            <person name="Shumway M."/>
            <person name="Trapnell C."/>
            <person name="Aparna G."/>
            <person name="Jha G."/>
            <person name="Pandey A."/>
            <person name="Patil P.B."/>
            <person name="Ishihara H."/>
            <person name="Meyer D.F."/>
            <person name="Szurek B."/>
            <person name="Verdier V."/>
            <person name="Koebnik R."/>
            <person name="Dow J.M."/>
            <person name="Ryan R.P."/>
            <person name="Hirata H."/>
            <person name="Tsuyumu S."/>
            <person name="Won Lee S."/>
            <person name="Seo Y.-S."/>
            <person name="Sriariyanum M."/>
            <person name="Ronald P.C."/>
            <person name="Sonti R.V."/>
            <person name="Van Sluys M.-A."/>
            <person name="Leach J.E."/>
            <person name="White F.F."/>
            <person name="Bogdanove A.J."/>
        </authorList>
    </citation>
    <scope>NUCLEOTIDE SEQUENCE [LARGE SCALE GENOMIC DNA]</scope>
    <source>
        <strain>PXO99A</strain>
    </source>
</reference>
<accession>B2SUA4</accession>
<dbReference type="EC" id="2.5.1.55" evidence="1"/>
<dbReference type="EMBL" id="CP000967">
    <property type="protein sequence ID" value="ACD58294.1"/>
    <property type="molecule type" value="Genomic_DNA"/>
</dbReference>
<dbReference type="RefSeq" id="WP_011259531.1">
    <property type="nucleotide sequence ID" value="NC_010717.2"/>
</dbReference>
<dbReference type="SMR" id="B2SUA4"/>
<dbReference type="KEGG" id="xop:PXO_00173"/>
<dbReference type="eggNOG" id="COG2877">
    <property type="taxonomic scope" value="Bacteria"/>
</dbReference>
<dbReference type="HOGENOM" id="CLU_036666_0_0_6"/>
<dbReference type="UniPathway" id="UPA00030"/>
<dbReference type="UniPathway" id="UPA00357">
    <property type="reaction ID" value="UER00474"/>
</dbReference>
<dbReference type="Proteomes" id="UP000001740">
    <property type="component" value="Chromosome"/>
</dbReference>
<dbReference type="GO" id="GO:0005737">
    <property type="term" value="C:cytoplasm"/>
    <property type="evidence" value="ECO:0007669"/>
    <property type="project" value="UniProtKB-SubCell"/>
</dbReference>
<dbReference type="GO" id="GO:0008676">
    <property type="term" value="F:3-deoxy-8-phosphooctulonate synthase activity"/>
    <property type="evidence" value="ECO:0007669"/>
    <property type="project" value="UniProtKB-UniRule"/>
</dbReference>
<dbReference type="GO" id="GO:0019294">
    <property type="term" value="P:keto-3-deoxy-D-manno-octulosonic acid biosynthetic process"/>
    <property type="evidence" value="ECO:0007669"/>
    <property type="project" value="UniProtKB-UniRule"/>
</dbReference>
<dbReference type="Gene3D" id="3.20.20.70">
    <property type="entry name" value="Aldolase class I"/>
    <property type="match status" value="1"/>
</dbReference>
<dbReference type="HAMAP" id="MF_00056">
    <property type="entry name" value="KDO8P_synth"/>
    <property type="match status" value="1"/>
</dbReference>
<dbReference type="InterPro" id="IPR013785">
    <property type="entry name" value="Aldolase_TIM"/>
</dbReference>
<dbReference type="InterPro" id="IPR006218">
    <property type="entry name" value="DAHP1/KDSA"/>
</dbReference>
<dbReference type="InterPro" id="IPR006269">
    <property type="entry name" value="KDO8P_synthase"/>
</dbReference>
<dbReference type="NCBIfam" id="TIGR01362">
    <property type="entry name" value="KDO8P_synth"/>
    <property type="match status" value="1"/>
</dbReference>
<dbReference type="NCBIfam" id="NF003543">
    <property type="entry name" value="PRK05198.1"/>
    <property type="match status" value="1"/>
</dbReference>
<dbReference type="PANTHER" id="PTHR21057">
    <property type="entry name" value="PHOSPHO-2-DEHYDRO-3-DEOXYHEPTONATE ALDOLASE"/>
    <property type="match status" value="1"/>
</dbReference>
<dbReference type="Pfam" id="PF00793">
    <property type="entry name" value="DAHP_synth_1"/>
    <property type="match status" value="1"/>
</dbReference>
<dbReference type="SUPFAM" id="SSF51569">
    <property type="entry name" value="Aldolase"/>
    <property type="match status" value="1"/>
</dbReference>